<accession>O24540</accession>
<proteinExistence type="evidence at transcript level"/>
<dbReference type="EC" id="6.2.1.12" evidence="1"/>
<dbReference type="SMR" id="O24540"/>
<dbReference type="UniPathway" id="UPA00372">
    <property type="reaction ID" value="UER00547"/>
</dbReference>
<dbReference type="GO" id="GO:0016207">
    <property type="term" value="F:4-coumarate-CoA ligase activity"/>
    <property type="evidence" value="ECO:0007669"/>
    <property type="project" value="UniProtKB-EC"/>
</dbReference>
<dbReference type="GO" id="GO:0005524">
    <property type="term" value="F:ATP binding"/>
    <property type="evidence" value="ECO:0007669"/>
    <property type="project" value="UniProtKB-KW"/>
</dbReference>
<dbReference type="GO" id="GO:0106290">
    <property type="term" value="F:trans-cinnamate-CoA ligase activity"/>
    <property type="evidence" value="ECO:0007669"/>
    <property type="project" value="UniProtKB-ARBA"/>
</dbReference>
<dbReference type="GO" id="GO:0009698">
    <property type="term" value="P:phenylpropanoid metabolic process"/>
    <property type="evidence" value="ECO:0007669"/>
    <property type="project" value="UniProtKB-KW"/>
</dbReference>
<dbReference type="CDD" id="cd05904">
    <property type="entry name" value="4CL"/>
    <property type="match status" value="1"/>
</dbReference>
<dbReference type="FunFam" id="3.30.300.30:FF:000007">
    <property type="entry name" value="4-coumarate--CoA ligase 2"/>
    <property type="match status" value="1"/>
</dbReference>
<dbReference type="FunFam" id="3.40.50.12780:FF:000003">
    <property type="entry name" value="Long-chain-fatty-acid--CoA ligase FadD"/>
    <property type="match status" value="1"/>
</dbReference>
<dbReference type="Gene3D" id="3.30.300.30">
    <property type="match status" value="1"/>
</dbReference>
<dbReference type="Gene3D" id="3.40.50.12780">
    <property type="entry name" value="N-terminal domain of ligase-like"/>
    <property type="match status" value="1"/>
</dbReference>
<dbReference type="InterPro" id="IPR025110">
    <property type="entry name" value="AMP-bd_C"/>
</dbReference>
<dbReference type="InterPro" id="IPR045851">
    <property type="entry name" value="AMP-bd_C_sf"/>
</dbReference>
<dbReference type="InterPro" id="IPR020845">
    <property type="entry name" value="AMP-binding_CS"/>
</dbReference>
<dbReference type="InterPro" id="IPR000873">
    <property type="entry name" value="AMP-dep_synth/lig_dom"/>
</dbReference>
<dbReference type="InterPro" id="IPR042099">
    <property type="entry name" value="ANL_N_sf"/>
</dbReference>
<dbReference type="PANTHER" id="PTHR24096:SF406">
    <property type="entry name" value="4-COUMARATE--COA LIGASE 2"/>
    <property type="match status" value="1"/>
</dbReference>
<dbReference type="PANTHER" id="PTHR24096">
    <property type="entry name" value="LONG-CHAIN-FATTY-ACID--COA LIGASE"/>
    <property type="match status" value="1"/>
</dbReference>
<dbReference type="Pfam" id="PF00501">
    <property type="entry name" value="AMP-binding"/>
    <property type="match status" value="1"/>
</dbReference>
<dbReference type="Pfam" id="PF13193">
    <property type="entry name" value="AMP-binding_C"/>
    <property type="match status" value="1"/>
</dbReference>
<dbReference type="SUPFAM" id="SSF56801">
    <property type="entry name" value="Acetyl-CoA synthetase-like"/>
    <property type="match status" value="1"/>
</dbReference>
<dbReference type="PROSITE" id="PS00455">
    <property type="entry name" value="AMP_BINDING"/>
    <property type="match status" value="1"/>
</dbReference>
<gene>
    <name evidence="3" type="primary">4CL</name>
</gene>
<evidence type="ECO:0000250" key="1">
    <source>
        <dbReference type="UniProtKB" id="O24146"/>
    </source>
</evidence>
<evidence type="ECO:0000250" key="2">
    <source>
        <dbReference type="UniProtKB" id="Q42524"/>
    </source>
</evidence>
<evidence type="ECO:0000303" key="3">
    <source ref="1"/>
</evidence>
<evidence type="ECO:0000305" key="4"/>
<protein>
    <recommendedName>
        <fullName evidence="3">4-coumarate--CoA ligase</fullName>
        <shortName evidence="3">4CL</shortName>
        <ecNumber evidence="1">6.2.1.12</ecNumber>
    </recommendedName>
    <alternativeName>
        <fullName evidence="4">4-coumaroyl-CoA synthase</fullName>
    </alternativeName>
</protein>
<organism>
    <name type="scientific">Vanilla planifolia</name>
    <name type="common">Vanilla</name>
    <dbReference type="NCBI Taxonomy" id="51239"/>
    <lineage>
        <taxon>Eukaryota</taxon>
        <taxon>Viridiplantae</taxon>
        <taxon>Streptophyta</taxon>
        <taxon>Embryophyta</taxon>
        <taxon>Tracheophyta</taxon>
        <taxon>Spermatophyta</taxon>
        <taxon>Magnoliopsida</taxon>
        <taxon>Liliopsida</taxon>
        <taxon>Asparagales</taxon>
        <taxon>Orchidaceae</taxon>
        <taxon>Vanilloideae</taxon>
        <taxon>Vanilleae</taxon>
        <taxon>Vanilla</taxon>
    </lineage>
</organism>
<reference key="1">
    <citation type="journal article" date="1997" name="Plant Physiol. Biochem.">
        <title>Isolation and characterization of a cDNA from cell suspension cultures of Vanilla planifolia encoding 4-coumarate: coenzyme A ligase.</title>
        <authorList>
            <person name="Brodelius P."/>
            <person name="Xue Z.T."/>
        </authorList>
    </citation>
    <scope>NUCLEOTIDE SEQUENCE [MRNA]</scope>
</reference>
<keyword id="KW-0067">ATP-binding</keyword>
<keyword id="KW-0436">Ligase</keyword>
<keyword id="KW-0460">Magnesium</keyword>
<keyword id="KW-0547">Nucleotide-binding</keyword>
<keyword id="KW-0587">Phenylpropanoid metabolism</keyword>
<feature type="chain" id="PRO_0000193042" description="4-coumarate--CoA ligase">
    <location>
        <begin position="1"/>
        <end position="553"/>
    </location>
</feature>
<feature type="region of interest" description="SBD1" evidence="2">
    <location>
        <begin position="271"/>
        <end position="340"/>
    </location>
</feature>
<feature type="region of interest" description="SBD2" evidence="2">
    <location>
        <begin position="341"/>
        <end position="408"/>
    </location>
</feature>
<feature type="binding site" evidence="1">
    <location>
        <position position="198"/>
    </location>
    <ligand>
        <name>ATP</name>
        <dbReference type="ChEBI" id="CHEBI:30616"/>
    </ligand>
</feature>
<feature type="binding site" evidence="1">
    <location>
        <position position="199"/>
    </location>
    <ligand>
        <name>ATP</name>
        <dbReference type="ChEBI" id="CHEBI:30616"/>
    </ligand>
</feature>
<feature type="binding site" evidence="1">
    <location>
        <position position="200"/>
    </location>
    <ligand>
        <name>ATP</name>
        <dbReference type="ChEBI" id="CHEBI:30616"/>
    </ligand>
</feature>
<feature type="binding site" evidence="1">
    <location>
        <position position="201"/>
    </location>
    <ligand>
        <name>ATP</name>
        <dbReference type="ChEBI" id="CHEBI:30616"/>
    </ligand>
</feature>
<feature type="binding site" evidence="1">
    <location>
        <position position="202"/>
    </location>
    <ligand>
        <name>ATP</name>
        <dbReference type="ChEBI" id="CHEBI:30616"/>
    </ligand>
</feature>
<feature type="binding site" evidence="1">
    <location>
        <position position="206"/>
    </location>
    <ligand>
        <name>ATP</name>
        <dbReference type="ChEBI" id="CHEBI:30616"/>
    </ligand>
</feature>
<feature type="binding site" evidence="1">
    <location>
        <position position="248"/>
    </location>
    <ligand>
        <name>(E)-4-coumaroyl-AMP</name>
        <dbReference type="ChEBI" id="CHEBI:192348"/>
    </ligand>
</feature>
<feature type="binding site" evidence="1">
    <location>
        <position position="252"/>
    </location>
    <ligand>
        <name>(E)-4-coumaroyl-AMP</name>
        <dbReference type="ChEBI" id="CHEBI:192348"/>
    </ligand>
</feature>
<feature type="binding site" evidence="1">
    <location>
        <position position="269"/>
    </location>
    <ligand>
        <name>CoA</name>
        <dbReference type="ChEBI" id="CHEBI:57287"/>
    </ligand>
</feature>
<feature type="binding site" evidence="1">
    <location>
        <position position="318"/>
    </location>
    <ligand>
        <name>(E)-4-coumaroyl-AMP</name>
        <dbReference type="ChEBI" id="CHEBI:192348"/>
    </ligand>
</feature>
<feature type="binding site" evidence="1">
    <location>
        <position position="340"/>
    </location>
    <ligand>
        <name>(E)-4-coumaroyl-AMP</name>
        <dbReference type="ChEBI" id="CHEBI:192348"/>
    </ligand>
</feature>
<feature type="binding site" evidence="1">
    <location>
        <position position="340"/>
    </location>
    <ligand>
        <name>ATP</name>
        <dbReference type="ChEBI" id="CHEBI:30616"/>
    </ligand>
</feature>
<feature type="binding site" evidence="1">
    <location>
        <position position="341"/>
    </location>
    <ligand>
        <name>(E)-4-coumaroyl-AMP</name>
        <dbReference type="ChEBI" id="CHEBI:192348"/>
    </ligand>
</feature>
<feature type="binding site" evidence="1">
    <location>
        <position position="341"/>
    </location>
    <ligand>
        <name>ATP</name>
        <dbReference type="ChEBI" id="CHEBI:30616"/>
    </ligand>
</feature>
<feature type="binding site" evidence="1">
    <location>
        <position position="345"/>
    </location>
    <ligand>
        <name>(E)-4-coumaroyl-AMP</name>
        <dbReference type="ChEBI" id="CHEBI:192348"/>
    </ligand>
</feature>
<feature type="binding site" evidence="1">
    <location>
        <position position="345"/>
    </location>
    <ligand>
        <name>ATP</name>
        <dbReference type="ChEBI" id="CHEBI:30616"/>
    </ligand>
</feature>
<feature type="binding site" evidence="1">
    <location>
        <position position="353"/>
    </location>
    <ligand>
        <name>(E)-4-coumaroyl-AMP</name>
        <dbReference type="ChEBI" id="CHEBI:192348"/>
    </ligand>
</feature>
<feature type="binding site" evidence="1">
    <location>
        <position position="429"/>
    </location>
    <ligand>
        <name>ATP</name>
        <dbReference type="ChEBI" id="CHEBI:30616"/>
    </ligand>
</feature>
<feature type="binding site" evidence="1">
    <location>
        <position position="444"/>
    </location>
    <ligand>
        <name>ATP</name>
        <dbReference type="ChEBI" id="CHEBI:30616"/>
    </ligand>
</feature>
<feature type="binding site" evidence="1">
    <location>
        <position position="446"/>
    </location>
    <ligand>
        <name>(E)-4-coumaroyl-AMP</name>
        <dbReference type="ChEBI" id="CHEBI:192348"/>
    </ligand>
</feature>
<feature type="binding site" evidence="1">
    <location>
        <position position="450"/>
    </location>
    <ligand>
        <name>(E)-4-coumaroyl-AMP</name>
        <dbReference type="ChEBI" id="CHEBI:192348"/>
    </ligand>
</feature>
<feature type="binding site" evidence="1">
    <location>
        <position position="452"/>
    </location>
    <ligand>
        <name>CoA</name>
        <dbReference type="ChEBI" id="CHEBI:57287"/>
    </ligand>
</feature>
<feature type="binding site" evidence="1">
    <location>
        <position position="453"/>
    </location>
    <ligand>
        <name>CoA</name>
        <dbReference type="ChEBI" id="CHEBI:57287"/>
    </ligand>
</feature>
<feature type="binding site" evidence="1">
    <location>
        <position position="535"/>
    </location>
    <ligand>
        <name>ATP</name>
        <dbReference type="ChEBI" id="CHEBI:30616"/>
    </ligand>
</feature>
<name>4CL_VANPL</name>
<comment type="function">
    <text evidence="1">Carboxylate--CoA ligase that may use 4-coumarate as substrate. Follows a two-step reaction mechanism, wherein the carboxylate substrate first undergoes adenylation by ATP, followed by a thioesterification in the presence of CoA to yield the final CoA thioester.</text>
</comment>
<comment type="catalytic activity">
    <reaction evidence="1">
        <text>(E)-4-coumarate + ATP + CoA = (E)-4-coumaroyl-CoA + AMP + diphosphate</text>
        <dbReference type="Rhea" id="RHEA:19641"/>
        <dbReference type="ChEBI" id="CHEBI:12876"/>
        <dbReference type="ChEBI" id="CHEBI:30616"/>
        <dbReference type="ChEBI" id="CHEBI:33019"/>
        <dbReference type="ChEBI" id="CHEBI:57287"/>
        <dbReference type="ChEBI" id="CHEBI:85008"/>
        <dbReference type="ChEBI" id="CHEBI:456215"/>
        <dbReference type="EC" id="6.2.1.12"/>
    </reaction>
    <physiologicalReaction direction="left-to-right" evidence="1">
        <dbReference type="Rhea" id="RHEA:19642"/>
    </physiologicalReaction>
</comment>
<comment type="catalytic activity">
    <reaction evidence="1">
        <text>(E)-4-coumarate + ATP + H(+) = (E)-4-coumaroyl-AMP + diphosphate</text>
        <dbReference type="Rhea" id="RHEA:72419"/>
        <dbReference type="ChEBI" id="CHEBI:12876"/>
        <dbReference type="ChEBI" id="CHEBI:15378"/>
        <dbReference type="ChEBI" id="CHEBI:30616"/>
        <dbReference type="ChEBI" id="CHEBI:33019"/>
        <dbReference type="ChEBI" id="CHEBI:192348"/>
    </reaction>
    <physiologicalReaction direction="left-to-right" evidence="1">
        <dbReference type="Rhea" id="RHEA:72420"/>
    </physiologicalReaction>
</comment>
<comment type="catalytic activity">
    <reaction evidence="1">
        <text>(E)-4-coumaroyl-AMP + CoA = (E)-4-coumaroyl-CoA + AMP + H(+)</text>
        <dbReference type="Rhea" id="RHEA:72423"/>
        <dbReference type="ChEBI" id="CHEBI:15378"/>
        <dbReference type="ChEBI" id="CHEBI:57287"/>
        <dbReference type="ChEBI" id="CHEBI:85008"/>
        <dbReference type="ChEBI" id="CHEBI:192348"/>
        <dbReference type="ChEBI" id="CHEBI:456215"/>
    </reaction>
    <physiologicalReaction direction="left-to-right" evidence="1">
        <dbReference type="Rhea" id="RHEA:72424"/>
    </physiologicalReaction>
</comment>
<comment type="cofactor">
    <cofactor evidence="1">
        <name>Mg(2+)</name>
        <dbReference type="ChEBI" id="CHEBI:18420"/>
    </cofactor>
</comment>
<comment type="pathway">
    <text evidence="2">Phytoalexin biosynthesis; 3,4',5-trihydroxystilbene biosynthesis; 3,4',5-trihydroxystilbene from trans-4-coumarate: step 1/2.</text>
</comment>
<comment type="domain">
    <text evidence="2">Both substrate-binding domains (SBD1 and SBD2) are involved in the substrate recognition, and are sufficient to confer the substrate specificity.</text>
</comment>
<comment type="similarity">
    <text evidence="4">Belongs to the ATP-dependent AMP-binding enzyme family.</text>
</comment>
<sequence>MAAAVAIEEQKKDIIFRSKLPDIYIPKNLPLHSYCFENISKFSSRPCLINGATDEIFTYADVELISRRVGSGLSKLGIKQGDTIMILLPNSPEFVFAFLGASFIGSISTMANPFFTSTEVIKQAKASNAKLIITQGCYVDKVKDYACENGVKIISIDTTTTADDAANILHFSELTGADENEMPKVEISPDGVVALPYSSGTTGLPKGVMLTHKGLVTSVAQQVDGENPNLYMHSDDVLLCVLPLFHIYSLNSVLLCGLRAGSGILIMQKFEIVPFLELIQKYKVTIGPFVPPIVLAIAKSTVVDNYDLSSVRTVMSGAAPLGKELEDAVRAKFPNAKLGQGYGMTEAGPVLAMCLAFAKEPFDIKSGACGTVVRNAEMKIVDPETGSSLPRNHPGEICIRGDQIMKGYLNDPEATARTIDKEGWLHTGDIGYIDDDDELFIVDRLKELIKYKGFQVAPAELEALLLTHPCISDAAVVPMKDEAAGEVPVAFVVKSNGHNITEDEIKQFISKQVIFYKRINRVFFVEAIPKAPSGKILRKDLRARLAAAALPTN</sequence>